<comment type="function">
    <text evidence="1">Required for high-level Shh responses in the developing neural tube. Together with TBC1D32, controls the structure of the primary cilium by coordinating assembly of the ciliary membrane and axoneme, allowing GLI2 to be properly activated in response to SHH signaling. Involved in cell growth. Activates CDK2, a kinase involved in the control of the cell cycle, by phosphorylating residue 'Thr-160' (By similarity).</text>
</comment>
<comment type="catalytic activity">
    <reaction>
        <text>L-seryl-[protein] + ATP = O-phospho-L-seryl-[protein] + ADP + H(+)</text>
        <dbReference type="Rhea" id="RHEA:17989"/>
        <dbReference type="Rhea" id="RHEA-COMP:9863"/>
        <dbReference type="Rhea" id="RHEA-COMP:11604"/>
        <dbReference type="ChEBI" id="CHEBI:15378"/>
        <dbReference type="ChEBI" id="CHEBI:29999"/>
        <dbReference type="ChEBI" id="CHEBI:30616"/>
        <dbReference type="ChEBI" id="CHEBI:83421"/>
        <dbReference type="ChEBI" id="CHEBI:456216"/>
        <dbReference type="EC" id="2.7.11.22"/>
    </reaction>
</comment>
<comment type="catalytic activity">
    <reaction>
        <text>L-threonyl-[protein] + ATP = O-phospho-L-threonyl-[protein] + ADP + H(+)</text>
        <dbReference type="Rhea" id="RHEA:46608"/>
        <dbReference type="Rhea" id="RHEA-COMP:11060"/>
        <dbReference type="Rhea" id="RHEA-COMP:11605"/>
        <dbReference type="ChEBI" id="CHEBI:15378"/>
        <dbReference type="ChEBI" id="CHEBI:30013"/>
        <dbReference type="ChEBI" id="CHEBI:30616"/>
        <dbReference type="ChEBI" id="CHEBI:61977"/>
        <dbReference type="ChEBI" id="CHEBI:456216"/>
        <dbReference type="EC" id="2.7.11.22"/>
    </reaction>
</comment>
<comment type="subunit">
    <text evidence="1">Monomer. Interacts with TBC1D32 and MAK.</text>
</comment>
<comment type="subcellular location">
    <subcellularLocation>
        <location evidence="1">Nucleus</location>
    </subcellularLocation>
    <subcellularLocation>
        <location evidence="1">Cytoplasm</location>
    </subcellularLocation>
    <subcellularLocation>
        <location evidence="1">Cell projection</location>
        <location evidence="1">Cilium</location>
    </subcellularLocation>
</comment>
<comment type="alternative products">
    <event type="alternative splicing"/>
    <isoform>
        <id>Q5EDC3-1</id>
        <name>1</name>
        <name>Cardiac CCRK</name>
        <sequence type="displayed"/>
    </isoform>
    <text>A number of isoforms may be produced.</text>
</comment>
<comment type="similarity">
    <text evidence="4">Belongs to the protein kinase superfamily. CMGC Ser/Thr protein kinase family. CDC2/CDKX subfamily.</text>
</comment>
<dbReference type="EC" id="2.7.11.22"/>
<dbReference type="EMBL" id="AY904368">
    <property type="protein sequence ID" value="AAW82350.1"/>
    <property type="molecule type" value="mRNA"/>
</dbReference>
<dbReference type="RefSeq" id="NP_001028097.1">
    <property type="nucleotide sequence ID" value="NM_001032925.1"/>
</dbReference>
<dbReference type="SMR" id="Q5EDC3"/>
<dbReference type="STRING" id="9544.ENSMMUP00000047272"/>
<dbReference type="PaxDb" id="9544-ENSMMUP00000013685"/>
<dbReference type="GeneID" id="574316"/>
<dbReference type="KEGG" id="mcc:574316"/>
<dbReference type="CTD" id="23552"/>
<dbReference type="eggNOG" id="KOG0659">
    <property type="taxonomic scope" value="Eukaryota"/>
</dbReference>
<dbReference type="InParanoid" id="Q5EDC3"/>
<dbReference type="OrthoDB" id="63265at2759"/>
<dbReference type="Proteomes" id="UP000006718">
    <property type="component" value="Unassembled WGS sequence"/>
</dbReference>
<dbReference type="GO" id="GO:0005929">
    <property type="term" value="C:cilium"/>
    <property type="evidence" value="ECO:0007669"/>
    <property type="project" value="UniProtKB-SubCell"/>
</dbReference>
<dbReference type="GO" id="GO:0005737">
    <property type="term" value="C:cytoplasm"/>
    <property type="evidence" value="ECO:0007669"/>
    <property type="project" value="UniProtKB-SubCell"/>
</dbReference>
<dbReference type="GO" id="GO:0005634">
    <property type="term" value="C:nucleus"/>
    <property type="evidence" value="ECO:0000318"/>
    <property type="project" value="GO_Central"/>
</dbReference>
<dbReference type="GO" id="GO:0005524">
    <property type="term" value="F:ATP binding"/>
    <property type="evidence" value="ECO:0007669"/>
    <property type="project" value="UniProtKB-KW"/>
</dbReference>
<dbReference type="GO" id="GO:0004693">
    <property type="term" value="F:cyclin-dependent protein serine/threonine kinase activity"/>
    <property type="evidence" value="ECO:0007669"/>
    <property type="project" value="UniProtKB-EC"/>
</dbReference>
<dbReference type="GO" id="GO:0106310">
    <property type="term" value="F:protein serine kinase activity"/>
    <property type="evidence" value="ECO:0007669"/>
    <property type="project" value="RHEA"/>
</dbReference>
<dbReference type="GO" id="GO:0004674">
    <property type="term" value="F:protein serine/threonine kinase activity"/>
    <property type="evidence" value="ECO:0000318"/>
    <property type="project" value="GO_Central"/>
</dbReference>
<dbReference type="GO" id="GO:0051301">
    <property type="term" value="P:cell division"/>
    <property type="evidence" value="ECO:0007669"/>
    <property type="project" value="UniProtKB-KW"/>
</dbReference>
<dbReference type="FunFam" id="1.10.510.10:FF:000952">
    <property type="entry name" value="cyclin-dependent kinase 20 isoform X4"/>
    <property type="match status" value="1"/>
</dbReference>
<dbReference type="FunFam" id="3.30.200.20:FF:000211">
    <property type="entry name" value="Putative cyclin-dependent kinase 20"/>
    <property type="match status" value="1"/>
</dbReference>
<dbReference type="Gene3D" id="3.30.200.20">
    <property type="entry name" value="Phosphorylase Kinase, domain 1"/>
    <property type="match status" value="1"/>
</dbReference>
<dbReference type="Gene3D" id="1.10.510.10">
    <property type="entry name" value="Transferase(Phosphotransferase) domain 1"/>
    <property type="match status" value="1"/>
</dbReference>
<dbReference type="InterPro" id="IPR050108">
    <property type="entry name" value="CDK"/>
</dbReference>
<dbReference type="InterPro" id="IPR011009">
    <property type="entry name" value="Kinase-like_dom_sf"/>
</dbReference>
<dbReference type="InterPro" id="IPR000719">
    <property type="entry name" value="Prot_kinase_dom"/>
</dbReference>
<dbReference type="InterPro" id="IPR017441">
    <property type="entry name" value="Protein_kinase_ATP_BS"/>
</dbReference>
<dbReference type="InterPro" id="IPR008271">
    <property type="entry name" value="Ser/Thr_kinase_AS"/>
</dbReference>
<dbReference type="PANTHER" id="PTHR24056">
    <property type="entry name" value="CELL DIVISION PROTEIN KINASE"/>
    <property type="match status" value="1"/>
</dbReference>
<dbReference type="PANTHER" id="PTHR24056:SF171">
    <property type="entry name" value="CYCLIN-DEPENDENT KINASE 20"/>
    <property type="match status" value="1"/>
</dbReference>
<dbReference type="Pfam" id="PF00069">
    <property type="entry name" value="Pkinase"/>
    <property type="match status" value="1"/>
</dbReference>
<dbReference type="SMART" id="SM00220">
    <property type="entry name" value="S_TKc"/>
    <property type="match status" value="1"/>
</dbReference>
<dbReference type="SUPFAM" id="SSF56112">
    <property type="entry name" value="Protein kinase-like (PK-like)"/>
    <property type="match status" value="1"/>
</dbReference>
<dbReference type="PROSITE" id="PS00107">
    <property type="entry name" value="PROTEIN_KINASE_ATP"/>
    <property type="match status" value="1"/>
</dbReference>
<dbReference type="PROSITE" id="PS50011">
    <property type="entry name" value="PROTEIN_KINASE_DOM"/>
    <property type="match status" value="1"/>
</dbReference>
<dbReference type="PROSITE" id="PS00108">
    <property type="entry name" value="PROTEIN_KINASE_ST"/>
    <property type="match status" value="1"/>
</dbReference>
<feature type="chain" id="PRO_0000085702" description="Cyclin-dependent kinase 20">
    <location>
        <begin position="1"/>
        <end position="243"/>
    </location>
</feature>
<feature type="domain" description="Protein kinase" evidence="2">
    <location>
        <begin position="4"/>
        <end position="243"/>
    </location>
</feature>
<feature type="active site" description="Proton acceptor" evidence="2 3">
    <location>
        <position position="127"/>
    </location>
</feature>
<feature type="binding site" evidence="2">
    <location>
        <begin position="10"/>
        <end position="18"/>
    </location>
    <ligand>
        <name>ATP</name>
        <dbReference type="ChEBI" id="CHEBI:30616"/>
    </ligand>
</feature>
<feature type="binding site" evidence="2">
    <location>
        <position position="33"/>
    </location>
    <ligand>
        <name>ATP</name>
        <dbReference type="ChEBI" id="CHEBI:30616"/>
    </ligand>
</feature>
<proteinExistence type="evidence at transcript level"/>
<evidence type="ECO:0000250" key="1"/>
<evidence type="ECO:0000255" key="2">
    <source>
        <dbReference type="PROSITE-ProRule" id="PRU00159"/>
    </source>
</evidence>
<evidence type="ECO:0000255" key="3">
    <source>
        <dbReference type="PROSITE-ProRule" id="PRU10027"/>
    </source>
</evidence>
<evidence type="ECO:0000305" key="4"/>
<sequence>MDQYCILGRIGEGAHGIVFKAKHVETGEIVALKKVALRRLEDGFPNQALREIKALQEMGDNQYVVQLKAVFPHGGGFVLAFEFMLSDLAEVVRHAQRPLAQAQVKSYLQMLLKGVAFCHANNIVHRDLKPANLLISASGQLKIADFGLARVFSPDGSRLYTHQVATRSSLSCRTTTRSPLRSRCPCPWRRCCLTSLPRHWICWVNSFSTLLTSASQLPRLSSISTSSQLPCLPIHLSCRFLSV</sequence>
<protein>
    <recommendedName>
        <fullName>Cyclin-dependent kinase 20</fullName>
        <ecNumber>2.7.11.22</ecNumber>
    </recommendedName>
    <alternativeName>
        <fullName>CDK-activating kinase p42</fullName>
        <shortName>CAK-kinase p42</shortName>
    </alternativeName>
    <alternativeName>
        <fullName>Cell cycle-related kinase</fullName>
    </alternativeName>
    <alternativeName>
        <fullName>Cell division protein kinase 20</fullName>
    </alternativeName>
    <alternativeName>
        <fullName>Cyclin-dependent protein kinase H</fullName>
    </alternativeName>
</protein>
<keyword id="KW-0025">Alternative splicing</keyword>
<keyword id="KW-0067">ATP-binding</keyword>
<keyword id="KW-0131">Cell cycle</keyword>
<keyword id="KW-0132">Cell division</keyword>
<keyword id="KW-0966">Cell projection</keyword>
<keyword id="KW-0969">Cilium</keyword>
<keyword id="KW-0963">Cytoplasm</keyword>
<keyword id="KW-0217">Developmental protein</keyword>
<keyword id="KW-0418">Kinase</keyword>
<keyword id="KW-0547">Nucleotide-binding</keyword>
<keyword id="KW-0539">Nucleus</keyword>
<keyword id="KW-1185">Reference proteome</keyword>
<keyword id="KW-0723">Serine/threonine-protein kinase</keyword>
<keyword id="KW-0808">Transferase</keyword>
<organism>
    <name type="scientific">Macaca mulatta</name>
    <name type="common">Rhesus macaque</name>
    <dbReference type="NCBI Taxonomy" id="9544"/>
    <lineage>
        <taxon>Eukaryota</taxon>
        <taxon>Metazoa</taxon>
        <taxon>Chordata</taxon>
        <taxon>Craniata</taxon>
        <taxon>Vertebrata</taxon>
        <taxon>Euteleostomi</taxon>
        <taxon>Mammalia</taxon>
        <taxon>Eutheria</taxon>
        <taxon>Euarchontoglires</taxon>
        <taxon>Primates</taxon>
        <taxon>Haplorrhini</taxon>
        <taxon>Catarrhini</taxon>
        <taxon>Cercopithecidae</taxon>
        <taxon>Cercopithecinae</taxon>
        <taxon>Macaca</taxon>
    </lineage>
</organism>
<name>CDK20_MACMU</name>
<reference key="1">
    <citation type="submission" date="2005-01" db="EMBL/GenBank/DDBJ databases">
        <title>Macaca mulatta cardiac p42, splice variant.</title>
        <authorList>
            <person name="Qiu H."/>
            <person name="Depre C."/>
        </authorList>
    </citation>
    <scope>NUCLEOTIDE SEQUENCE [MRNA]</scope>
    <source>
        <tissue>Heart</tissue>
    </source>
</reference>
<accession>Q5EDC3</accession>
<gene>
    <name type="primary">CDK20</name>
    <name type="synonym">CCRK</name>
    <name type="synonym">CDCH</name>
</gene>